<gene>
    <name evidence="1" type="primary">rplU</name>
    <name type="ordered locus">RB10134</name>
</gene>
<feature type="chain" id="PRO_0000270723" description="Large ribosomal subunit protein bL21">
    <location>
        <begin position="1"/>
        <end position="104"/>
    </location>
</feature>
<dbReference type="EMBL" id="BX294151">
    <property type="protein sequence ID" value="CAD78720.1"/>
    <property type="molecule type" value="Genomic_DNA"/>
</dbReference>
<dbReference type="RefSeq" id="NP_869263.1">
    <property type="nucleotide sequence ID" value="NC_005027.1"/>
</dbReference>
<dbReference type="RefSeq" id="WP_007325148.1">
    <property type="nucleotide sequence ID" value="NC_005027.1"/>
</dbReference>
<dbReference type="SMR" id="Q7UFG2"/>
<dbReference type="FunCoup" id="Q7UFG2">
    <property type="interactions" value="566"/>
</dbReference>
<dbReference type="STRING" id="243090.RB10134"/>
<dbReference type="EnsemblBacteria" id="CAD78720">
    <property type="protein sequence ID" value="CAD78720"/>
    <property type="gene ID" value="RB10134"/>
</dbReference>
<dbReference type="KEGG" id="rba:RB10134"/>
<dbReference type="PATRIC" id="fig|243090.15.peg.4890"/>
<dbReference type="eggNOG" id="COG0261">
    <property type="taxonomic scope" value="Bacteria"/>
</dbReference>
<dbReference type="HOGENOM" id="CLU_061463_3_2_0"/>
<dbReference type="InParanoid" id="Q7UFG2"/>
<dbReference type="OrthoDB" id="9813334at2"/>
<dbReference type="Proteomes" id="UP000001025">
    <property type="component" value="Chromosome"/>
</dbReference>
<dbReference type="GO" id="GO:0005737">
    <property type="term" value="C:cytoplasm"/>
    <property type="evidence" value="ECO:0007669"/>
    <property type="project" value="UniProtKB-ARBA"/>
</dbReference>
<dbReference type="GO" id="GO:1990904">
    <property type="term" value="C:ribonucleoprotein complex"/>
    <property type="evidence" value="ECO:0007669"/>
    <property type="project" value="UniProtKB-KW"/>
</dbReference>
<dbReference type="GO" id="GO:0005840">
    <property type="term" value="C:ribosome"/>
    <property type="evidence" value="ECO:0007669"/>
    <property type="project" value="UniProtKB-KW"/>
</dbReference>
<dbReference type="GO" id="GO:0019843">
    <property type="term" value="F:rRNA binding"/>
    <property type="evidence" value="ECO:0007669"/>
    <property type="project" value="UniProtKB-UniRule"/>
</dbReference>
<dbReference type="GO" id="GO:0003735">
    <property type="term" value="F:structural constituent of ribosome"/>
    <property type="evidence" value="ECO:0000318"/>
    <property type="project" value="GO_Central"/>
</dbReference>
<dbReference type="GO" id="GO:0006412">
    <property type="term" value="P:translation"/>
    <property type="evidence" value="ECO:0007669"/>
    <property type="project" value="UniProtKB-UniRule"/>
</dbReference>
<dbReference type="HAMAP" id="MF_01363">
    <property type="entry name" value="Ribosomal_bL21"/>
    <property type="match status" value="1"/>
</dbReference>
<dbReference type="InterPro" id="IPR028909">
    <property type="entry name" value="bL21-like"/>
</dbReference>
<dbReference type="InterPro" id="IPR036164">
    <property type="entry name" value="bL21-like_sf"/>
</dbReference>
<dbReference type="InterPro" id="IPR001787">
    <property type="entry name" value="Ribosomal_bL21"/>
</dbReference>
<dbReference type="InterPro" id="IPR018258">
    <property type="entry name" value="Ribosomal_bL21_CS"/>
</dbReference>
<dbReference type="NCBIfam" id="TIGR00061">
    <property type="entry name" value="L21"/>
    <property type="match status" value="1"/>
</dbReference>
<dbReference type="PANTHER" id="PTHR21349">
    <property type="entry name" value="50S RIBOSOMAL PROTEIN L21"/>
    <property type="match status" value="1"/>
</dbReference>
<dbReference type="PANTHER" id="PTHR21349:SF0">
    <property type="entry name" value="LARGE RIBOSOMAL SUBUNIT PROTEIN BL21M"/>
    <property type="match status" value="1"/>
</dbReference>
<dbReference type="Pfam" id="PF00829">
    <property type="entry name" value="Ribosomal_L21p"/>
    <property type="match status" value="1"/>
</dbReference>
<dbReference type="SUPFAM" id="SSF141091">
    <property type="entry name" value="L21p-like"/>
    <property type="match status" value="1"/>
</dbReference>
<dbReference type="PROSITE" id="PS01169">
    <property type="entry name" value="RIBOSOMAL_L21"/>
    <property type="match status" value="1"/>
</dbReference>
<keyword id="KW-1185">Reference proteome</keyword>
<keyword id="KW-0687">Ribonucleoprotein</keyword>
<keyword id="KW-0689">Ribosomal protein</keyword>
<keyword id="KW-0694">RNA-binding</keyword>
<keyword id="KW-0699">rRNA-binding</keyword>
<comment type="function">
    <text evidence="1">This protein binds to 23S rRNA in the presence of protein L20.</text>
</comment>
<comment type="subunit">
    <text evidence="1">Part of the 50S ribosomal subunit. Contacts protein L20.</text>
</comment>
<comment type="similarity">
    <text evidence="1">Belongs to the bacterial ribosomal protein bL21 family.</text>
</comment>
<sequence length="104" mass="11652">MYAIFVDGGRQYRVEPGMELDVDYRDIAAGENLKFETVLAVGAEDGLKLGAPTLDGVSVSASVLGMSQDKKIYIQKFRRRKHSKKRTGHRQKNTRIRIEEIAGV</sequence>
<accession>Q7UFG2</accession>
<protein>
    <recommendedName>
        <fullName evidence="1">Large ribosomal subunit protein bL21</fullName>
    </recommendedName>
    <alternativeName>
        <fullName evidence="2">50S ribosomal protein L21</fullName>
    </alternativeName>
</protein>
<reference key="1">
    <citation type="journal article" date="2003" name="Proc. Natl. Acad. Sci. U.S.A.">
        <title>Complete genome sequence of the marine planctomycete Pirellula sp. strain 1.</title>
        <authorList>
            <person name="Gloeckner F.O."/>
            <person name="Kube M."/>
            <person name="Bauer M."/>
            <person name="Teeling H."/>
            <person name="Lombardot T."/>
            <person name="Ludwig W."/>
            <person name="Gade D."/>
            <person name="Beck A."/>
            <person name="Borzym K."/>
            <person name="Heitmann K."/>
            <person name="Rabus R."/>
            <person name="Schlesner H."/>
            <person name="Amann R."/>
            <person name="Reinhardt R."/>
        </authorList>
    </citation>
    <scope>NUCLEOTIDE SEQUENCE [LARGE SCALE GENOMIC DNA]</scope>
    <source>
        <strain>DSM 10527 / NCIMB 13988 / SH1</strain>
    </source>
</reference>
<proteinExistence type="inferred from homology"/>
<evidence type="ECO:0000255" key="1">
    <source>
        <dbReference type="HAMAP-Rule" id="MF_01363"/>
    </source>
</evidence>
<evidence type="ECO:0000305" key="2"/>
<name>RL21_RHOBA</name>
<organism>
    <name type="scientific">Rhodopirellula baltica (strain DSM 10527 / NCIMB 13988 / SH1)</name>
    <dbReference type="NCBI Taxonomy" id="243090"/>
    <lineage>
        <taxon>Bacteria</taxon>
        <taxon>Pseudomonadati</taxon>
        <taxon>Planctomycetota</taxon>
        <taxon>Planctomycetia</taxon>
        <taxon>Pirellulales</taxon>
        <taxon>Pirellulaceae</taxon>
        <taxon>Rhodopirellula</taxon>
    </lineage>
</organism>